<protein>
    <recommendedName>
        <fullName evidence="1">RNA chaperone ProQ</fullName>
    </recommendedName>
</protein>
<evidence type="ECO:0000255" key="1">
    <source>
        <dbReference type="HAMAP-Rule" id="MF_00749"/>
    </source>
</evidence>
<evidence type="ECO:0000256" key="2">
    <source>
        <dbReference type="SAM" id="MobiDB-lite"/>
    </source>
</evidence>
<organism>
    <name type="scientific">Escherichia coli O45:K1 (strain S88 / ExPEC)</name>
    <dbReference type="NCBI Taxonomy" id="585035"/>
    <lineage>
        <taxon>Bacteria</taxon>
        <taxon>Pseudomonadati</taxon>
        <taxon>Pseudomonadota</taxon>
        <taxon>Gammaproteobacteria</taxon>
        <taxon>Enterobacterales</taxon>
        <taxon>Enterobacteriaceae</taxon>
        <taxon>Escherichia</taxon>
    </lineage>
</organism>
<reference key="1">
    <citation type="journal article" date="2009" name="PLoS Genet.">
        <title>Organised genome dynamics in the Escherichia coli species results in highly diverse adaptive paths.</title>
        <authorList>
            <person name="Touchon M."/>
            <person name="Hoede C."/>
            <person name="Tenaillon O."/>
            <person name="Barbe V."/>
            <person name="Baeriswyl S."/>
            <person name="Bidet P."/>
            <person name="Bingen E."/>
            <person name="Bonacorsi S."/>
            <person name="Bouchier C."/>
            <person name="Bouvet O."/>
            <person name="Calteau A."/>
            <person name="Chiapello H."/>
            <person name="Clermont O."/>
            <person name="Cruveiller S."/>
            <person name="Danchin A."/>
            <person name="Diard M."/>
            <person name="Dossat C."/>
            <person name="Karoui M.E."/>
            <person name="Frapy E."/>
            <person name="Garry L."/>
            <person name="Ghigo J.M."/>
            <person name="Gilles A.M."/>
            <person name="Johnson J."/>
            <person name="Le Bouguenec C."/>
            <person name="Lescat M."/>
            <person name="Mangenot S."/>
            <person name="Martinez-Jehanne V."/>
            <person name="Matic I."/>
            <person name="Nassif X."/>
            <person name="Oztas S."/>
            <person name="Petit M.A."/>
            <person name="Pichon C."/>
            <person name="Rouy Z."/>
            <person name="Ruf C.S."/>
            <person name="Schneider D."/>
            <person name="Tourret J."/>
            <person name="Vacherie B."/>
            <person name="Vallenet D."/>
            <person name="Medigue C."/>
            <person name="Rocha E.P.C."/>
            <person name="Denamur E."/>
        </authorList>
    </citation>
    <scope>NUCLEOTIDE SEQUENCE [LARGE SCALE GENOMIC DNA]</scope>
    <source>
        <strain>S88 / ExPEC</strain>
    </source>
</reference>
<dbReference type="EMBL" id="CU928161">
    <property type="protein sequence ID" value="CAR03190.1"/>
    <property type="molecule type" value="Genomic_DNA"/>
</dbReference>
<dbReference type="RefSeq" id="WP_000431376.1">
    <property type="nucleotide sequence ID" value="NC_011742.1"/>
</dbReference>
<dbReference type="BMRB" id="B7MBN8"/>
<dbReference type="SMR" id="B7MBN8"/>
<dbReference type="KEGG" id="ecz:ECS88_1884"/>
<dbReference type="HOGENOM" id="CLU_113254_0_0_6"/>
<dbReference type="Proteomes" id="UP000000747">
    <property type="component" value="Chromosome"/>
</dbReference>
<dbReference type="GO" id="GO:0005829">
    <property type="term" value="C:cytosol"/>
    <property type="evidence" value="ECO:0007669"/>
    <property type="project" value="TreeGrafter"/>
</dbReference>
<dbReference type="GO" id="GO:0033592">
    <property type="term" value="F:RNA strand annealing activity"/>
    <property type="evidence" value="ECO:0007669"/>
    <property type="project" value="UniProtKB-UniRule"/>
</dbReference>
<dbReference type="GO" id="GO:0034057">
    <property type="term" value="F:RNA strand-exchange activity"/>
    <property type="evidence" value="ECO:0007669"/>
    <property type="project" value="UniProtKB-UniRule"/>
</dbReference>
<dbReference type="GO" id="GO:0010608">
    <property type="term" value="P:post-transcriptional regulation of gene expression"/>
    <property type="evidence" value="ECO:0007669"/>
    <property type="project" value="InterPro"/>
</dbReference>
<dbReference type="FunFam" id="1.10.1710.10:FF:000001">
    <property type="entry name" value="RNA chaperone ProQ"/>
    <property type="match status" value="1"/>
</dbReference>
<dbReference type="Gene3D" id="1.10.1710.10">
    <property type="entry name" value="ProQ/FinO domain"/>
    <property type="match status" value="1"/>
</dbReference>
<dbReference type="HAMAP" id="MF_00749">
    <property type="entry name" value="ProQ"/>
    <property type="match status" value="1"/>
</dbReference>
<dbReference type="InterPro" id="IPR023529">
    <property type="entry name" value="ProQ"/>
</dbReference>
<dbReference type="InterPro" id="IPR016103">
    <property type="entry name" value="ProQ/FinO"/>
</dbReference>
<dbReference type="InterPro" id="IPR036442">
    <property type="entry name" value="ProQ/FinO_sf"/>
</dbReference>
<dbReference type="InterPro" id="IPR035236">
    <property type="entry name" value="ProQ_C"/>
</dbReference>
<dbReference type="NCBIfam" id="NF003434">
    <property type="entry name" value="PRK04950.1"/>
    <property type="match status" value="1"/>
</dbReference>
<dbReference type="PANTHER" id="PTHR38106">
    <property type="entry name" value="RNA CHAPERONE PROQ"/>
    <property type="match status" value="1"/>
</dbReference>
<dbReference type="PANTHER" id="PTHR38106:SF1">
    <property type="entry name" value="RNA CHAPERONE PROQ"/>
    <property type="match status" value="1"/>
</dbReference>
<dbReference type="Pfam" id="PF04352">
    <property type="entry name" value="ProQ"/>
    <property type="match status" value="1"/>
</dbReference>
<dbReference type="Pfam" id="PF17516">
    <property type="entry name" value="ProQ_C"/>
    <property type="match status" value="1"/>
</dbReference>
<dbReference type="SMART" id="SM00945">
    <property type="entry name" value="ProQ"/>
    <property type="match status" value="1"/>
</dbReference>
<dbReference type="SUPFAM" id="SSF48657">
    <property type="entry name" value="FinO-like"/>
    <property type="match status" value="1"/>
</dbReference>
<comment type="function">
    <text evidence="1">RNA chaperone with significant RNA binding, RNA strand exchange and RNA duplexing activities. May regulate ProP activity through an RNA-based, post-transcriptional mechanism.</text>
</comment>
<comment type="subcellular location">
    <subcellularLocation>
        <location evidence="1">Cytoplasm</location>
    </subcellularLocation>
</comment>
<comment type="similarity">
    <text evidence="1">Belongs to the ProQ family.</text>
</comment>
<accession>B7MBN8</accession>
<feature type="chain" id="PRO_1000192660" description="RNA chaperone ProQ">
    <location>
        <begin position="1"/>
        <end position="232"/>
    </location>
</feature>
<feature type="region of interest" description="Disordered" evidence="2">
    <location>
        <begin position="105"/>
        <end position="182"/>
    </location>
</feature>
<feature type="compositionally biased region" description="Basic and acidic residues" evidence="2">
    <location>
        <begin position="117"/>
        <end position="136"/>
    </location>
</feature>
<feature type="compositionally biased region" description="Basic residues" evidence="2">
    <location>
        <begin position="137"/>
        <end position="146"/>
    </location>
</feature>
<feature type="compositionally biased region" description="Basic and acidic residues" evidence="2">
    <location>
        <begin position="147"/>
        <end position="177"/>
    </location>
</feature>
<keyword id="KW-0143">Chaperone</keyword>
<keyword id="KW-0963">Cytoplasm</keyword>
<keyword id="KW-1185">Reference proteome</keyword>
<keyword id="KW-0694">RNA-binding</keyword>
<sequence>MENQPKLNSSKEVIAFLAERFPHCFSAEGEARPLKIGIFQDLVDRVAGEMNLSKTQLRSALRLYTSSWRYLYGVKPGATRVDLDGNPCGELDEQHVEHARKQLEEAKARVQAQRAEQQAKKREAAAAAGEKEDAPRRERKPRPTTPRRKEGAERKPRSQKPVEKAPKTVKAPREEQHTPVSDISALTVGQALKVKAGQNAMDATVLEITKDGVRVQLNSGMSLIVRAEHLVF</sequence>
<gene>
    <name evidence="1" type="primary">proQ</name>
    <name type="ordered locus">ECS88_1884</name>
</gene>
<proteinExistence type="inferred from homology"/>
<name>PROQ_ECO45</name>